<comment type="similarity">
    <text evidence="1">Belongs to the UPF0297 family.</text>
</comment>
<proteinExistence type="inferred from homology"/>
<reference key="1">
    <citation type="journal article" date="2007" name="PLoS ONE">
        <title>A glimpse of streptococcal toxic shock syndrome from comparative genomics of S. suis 2 Chinese isolates.</title>
        <authorList>
            <person name="Chen C."/>
            <person name="Tang J."/>
            <person name="Dong W."/>
            <person name="Wang C."/>
            <person name="Feng Y."/>
            <person name="Wang J."/>
            <person name="Zheng F."/>
            <person name="Pan X."/>
            <person name="Liu D."/>
            <person name="Li M."/>
            <person name="Song Y."/>
            <person name="Zhu X."/>
            <person name="Sun H."/>
            <person name="Feng T."/>
            <person name="Guo Z."/>
            <person name="Ju A."/>
            <person name="Ge J."/>
            <person name="Dong Y."/>
            <person name="Sun W."/>
            <person name="Jiang Y."/>
            <person name="Wang J."/>
            <person name="Yan J."/>
            <person name="Yang H."/>
            <person name="Wang X."/>
            <person name="Gao G.F."/>
            <person name="Yang R."/>
            <person name="Wang J."/>
            <person name="Yu J."/>
        </authorList>
    </citation>
    <scope>NUCLEOTIDE SEQUENCE [LARGE SCALE GENOMIC DNA]</scope>
    <source>
        <strain>05ZYH33</strain>
    </source>
</reference>
<accession>A4VSE9</accession>
<sequence length="88" mass="10373">MGFTEETVRFRLDDTDKQEISKTLTSVYRSLEEKGYNPINQIIGYVLSGDPAYIPRYNDARNQIRKHERDEIIEELVRYYLKGNGIDL</sequence>
<dbReference type="EMBL" id="CP000407">
    <property type="protein sequence ID" value="ABP89038.1"/>
    <property type="molecule type" value="Genomic_DNA"/>
</dbReference>
<dbReference type="SMR" id="A4VSE9"/>
<dbReference type="STRING" id="391295.SSU05_0066"/>
<dbReference type="KEGG" id="ssu:SSU05_0066"/>
<dbReference type="eggNOG" id="COG4472">
    <property type="taxonomic scope" value="Bacteria"/>
</dbReference>
<dbReference type="HOGENOM" id="CLU_162466_0_0_9"/>
<dbReference type="BioCyc" id="SSUI391295:GHI8-84-MONOMER"/>
<dbReference type="HAMAP" id="MF_01507">
    <property type="entry name" value="UPF0297"/>
    <property type="match status" value="1"/>
</dbReference>
<dbReference type="InterPro" id="IPR009309">
    <property type="entry name" value="IreB"/>
</dbReference>
<dbReference type="NCBIfam" id="NF003997">
    <property type="entry name" value="PRK05473.1"/>
    <property type="match status" value="1"/>
</dbReference>
<dbReference type="PANTHER" id="PTHR40067">
    <property type="entry name" value="UPF0297 PROTEIN YRZL"/>
    <property type="match status" value="1"/>
</dbReference>
<dbReference type="PANTHER" id="PTHR40067:SF1">
    <property type="entry name" value="UPF0297 PROTEIN YRZL"/>
    <property type="match status" value="1"/>
</dbReference>
<dbReference type="Pfam" id="PF06135">
    <property type="entry name" value="IreB"/>
    <property type="match status" value="1"/>
</dbReference>
<dbReference type="PIRSF" id="PIRSF037258">
    <property type="entry name" value="DUF965_bac"/>
    <property type="match status" value="1"/>
</dbReference>
<name>Y066_STRSY</name>
<protein>
    <recommendedName>
        <fullName evidence="1">UPF0297 protein SSU05_0066</fullName>
    </recommendedName>
</protein>
<feature type="chain" id="PRO_0000296638" description="UPF0297 protein SSU05_0066">
    <location>
        <begin position="1"/>
        <end position="88"/>
    </location>
</feature>
<evidence type="ECO:0000255" key="1">
    <source>
        <dbReference type="HAMAP-Rule" id="MF_01507"/>
    </source>
</evidence>
<gene>
    <name type="ordered locus">SSU05_0066</name>
</gene>
<organism>
    <name type="scientific">Streptococcus suis (strain 05ZYH33)</name>
    <dbReference type="NCBI Taxonomy" id="391295"/>
    <lineage>
        <taxon>Bacteria</taxon>
        <taxon>Bacillati</taxon>
        <taxon>Bacillota</taxon>
        <taxon>Bacilli</taxon>
        <taxon>Lactobacillales</taxon>
        <taxon>Streptococcaceae</taxon>
        <taxon>Streptococcus</taxon>
    </lineage>
</organism>